<keyword id="KW-0025">Alternative splicing</keyword>
<keyword id="KW-0238">DNA-binding</keyword>
<keyword id="KW-0539">Nucleus</keyword>
<keyword id="KW-0597">Phosphoprotein</keyword>
<keyword id="KW-1185">Reference proteome</keyword>
<keyword id="KW-0677">Repeat</keyword>
<keyword id="KW-0804">Transcription</keyword>
<keyword id="KW-0805">Transcription regulation</keyword>
<comment type="function">
    <text evidence="2">Part of the SNAPc complex required for the transcription of both RNA polymerase II and III small-nuclear RNA genes. Binds to the proximal sequence element (PSE), a non-TATA-box basal promoter element common to these 2 types of genes. Recruits TBP and BRF2 to the U6 snRNA TATA box (By similarity).</text>
</comment>
<comment type="subunit">
    <text evidence="1">Part of the SNAPc composed of 5 subunits: SNAPC1, SNAPC2, SNAPC3, SNAPC4 and SNAPC5. SNAPC4 interacts with SNAPC1, SNAPC2, SNAPC5, BRF2 and TBP (By similarity).</text>
</comment>
<comment type="subcellular location">
    <subcellularLocation>
        <location evidence="4">Nucleus</location>
    </subcellularLocation>
</comment>
<comment type="alternative products">
    <event type="alternative splicing"/>
    <isoform>
        <id>Q8BP86-1</id>
        <name evidence="8">1</name>
        <sequence type="displayed"/>
    </isoform>
    <isoform>
        <id>Q8BP86-2</id>
        <name evidence="8">2</name>
        <sequence type="described" ref="VSP_051857"/>
    </isoform>
    <isoform>
        <id>Q8BP86-3</id>
        <name evidence="8">3</name>
        <sequence type="described" ref="VSP_051855 VSP_051857"/>
    </isoform>
</comment>
<gene>
    <name evidence="12" type="primary">Snapc4</name>
</gene>
<dbReference type="EMBL" id="AK077522">
    <property type="protein sequence ID" value="BAC36843.1"/>
    <property type="molecule type" value="mRNA"/>
</dbReference>
<dbReference type="EMBL" id="BC044754">
    <property type="protein sequence ID" value="AAH44754.1"/>
    <property type="molecule type" value="mRNA"/>
</dbReference>
<dbReference type="EMBL" id="BC057031">
    <property type="protein sequence ID" value="AAH57031.1"/>
    <property type="molecule type" value="mRNA"/>
</dbReference>
<dbReference type="CCDS" id="CCDS15802.1">
    <molecule id="Q8BP86-2"/>
</dbReference>
<dbReference type="RefSeq" id="NP_001277348.1">
    <molecule id="Q8BP86-3"/>
    <property type="nucleotide sequence ID" value="NM_001290419.2"/>
</dbReference>
<dbReference type="RefSeq" id="NP_001393660.1">
    <molecule id="Q8BP86-1"/>
    <property type="nucleotide sequence ID" value="NM_001406731.1"/>
</dbReference>
<dbReference type="RefSeq" id="NP_001393661.1">
    <molecule id="Q8BP86-1"/>
    <property type="nucleotide sequence ID" value="NM_001406732.1"/>
</dbReference>
<dbReference type="RefSeq" id="NP_001393662.1">
    <molecule id="Q8BP86-2"/>
    <property type="nucleotide sequence ID" value="NM_001406733.1"/>
</dbReference>
<dbReference type="RefSeq" id="NP_758842.1">
    <molecule id="Q8BP86-2"/>
    <property type="nucleotide sequence ID" value="NM_172339.5"/>
</dbReference>
<dbReference type="SMR" id="Q8BP86"/>
<dbReference type="BioGRID" id="230655">
    <property type="interactions" value="3"/>
</dbReference>
<dbReference type="FunCoup" id="Q8BP86">
    <property type="interactions" value="202"/>
</dbReference>
<dbReference type="IntAct" id="Q8BP86">
    <property type="interactions" value="2"/>
</dbReference>
<dbReference type="STRING" id="10090.ENSMUSP00000041767"/>
<dbReference type="GlyGen" id="Q8BP86">
    <property type="glycosylation" value="1 site"/>
</dbReference>
<dbReference type="iPTMnet" id="Q8BP86"/>
<dbReference type="PhosphoSitePlus" id="Q8BP86"/>
<dbReference type="PaxDb" id="10090-ENSMUSP00000109750"/>
<dbReference type="ProteomicsDB" id="261391">
    <molecule id="Q8BP86-1"/>
</dbReference>
<dbReference type="ProteomicsDB" id="261392">
    <molecule id="Q8BP86-2"/>
</dbReference>
<dbReference type="ProteomicsDB" id="261393">
    <molecule id="Q8BP86-3"/>
</dbReference>
<dbReference type="Antibodypedia" id="18701">
    <property type="antibodies" value="208 antibodies from 21 providers"/>
</dbReference>
<dbReference type="DNASU" id="227644"/>
<dbReference type="Ensembl" id="ENSMUST00000035427.11">
    <molecule id="Q8BP86-2"/>
    <property type="protein sequence ID" value="ENSMUSP00000041767.5"/>
    <property type="gene ID" value="ENSMUSG00000036281.14"/>
</dbReference>
<dbReference type="GeneID" id="227644"/>
<dbReference type="KEGG" id="mmu:227644"/>
<dbReference type="UCSC" id="uc008iuu.2">
    <molecule id="Q8BP86-1"/>
    <property type="organism name" value="mouse"/>
</dbReference>
<dbReference type="UCSC" id="uc008iuv.2">
    <molecule id="Q8BP86-2"/>
    <property type="organism name" value="mouse"/>
</dbReference>
<dbReference type="UCSC" id="uc008iuw.2">
    <molecule id="Q8BP86-3"/>
    <property type="organism name" value="mouse"/>
</dbReference>
<dbReference type="AGR" id="MGI:2443935"/>
<dbReference type="CTD" id="6621"/>
<dbReference type="MGI" id="MGI:2443935">
    <property type="gene designation" value="Snapc4"/>
</dbReference>
<dbReference type="VEuPathDB" id="HostDB:ENSMUSG00000036281"/>
<dbReference type="eggNOG" id="KOG0049">
    <property type="taxonomic scope" value="Eukaryota"/>
</dbReference>
<dbReference type="GeneTree" id="ENSGT00940000160404"/>
<dbReference type="HOGENOM" id="CLU_004641_0_0_1"/>
<dbReference type="InParanoid" id="Q8BP86"/>
<dbReference type="OMA" id="MAFHQTK"/>
<dbReference type="PhylomeDB" id="Q8BP86"/>
<dbReference type="Reactome" id="R-MMU-6807505">
    <property type="pathway name" value="RNA polymerase II transcribes snRNA genes"/>
</dbReference>
<dbReference type="Reactome" id="R-MMU-76071">
    <property type="pathway name" value="RNA Polymerase III Transcription Initiation From Type 3 Promoter"/>
</dbReference>
<dbReference type="BioGRID-ORCS" id="227644">
    <property type="hits" value="28 hits in 82 CRISPR screens"/>
</dbReference>
<dbReference type="ChiTaRS" id="Snapc4">
    <property type="organism name" value="mouse"/>
</dbReference>
<dbReference type="PRO" id="PR:Q8BP86"/>
<dbReference type="Proteomes" id="UP000000589">
    <property type="component" value="Chromosome 2"/>
</dbReference>
<dbReference type="RNAct" id="Q8BP86">
    <property type="molecule type" value="protein"/>
</dbReference>
<dbReference type="Bgee" id="ENSMUSG00000036281">
    <property type="expression patterns" value="Expressed in superior frontal gyrus and 203 other cell types or tissues"/>
</dbReference>
<dbReference type="ExpressionAtlas" id="Q8BP86">
    <property type="expression patterns" value="baseline and differential"/>
</dbReference>
<dbReference type="GO" id="GO:0005634">
    <property type="term" value="C:nucleus"/>
    <property type="evidence" value="ECO:0007669"/>
    <property type="project" value="UniProtKB-SubCell"/>
</dbReference>
<dbReference type="GO" id="GO:0019185">
    <property type="term" value="C:snRNA-activating protein complex"/>
    <property type="evidence" value="ECO:0000250"/>
    <property type="project" value="UniProtKB"/>
</dbReference>
<dbReference type="GO" id="GO:0003677">
    <property type="term" value="F:DNA binding"/>
    <property type="evidence" value="ECO:0000250"/>
    <property type="project" value="UniProtKB"/>
</dbReference>
<dbReference type="GO" id="GO:0042795">
    <property type="term" value="P:snRNA transcription by RNA polymerase II"/>
    <property type="evidence" value="ECO:0000250"/>
    <property type="project" value="UniProtKB"/>
</dbReference>
<dbReference type="GO" id="GO:0042796">
    <property type="term" value="P:snRNA transcription by RNA polymerase III"/>
    <property type="evidence" value="ECO:0000250"/>
    <property type="project" value="UniProtKB"/>
</dbReference>
<dbReference type="CDD" id="cd00167">
    <property type="entry name" value="SANT"/>
    <property type="match status" value="3"/>
</dbReference>
<dbReference type="FunFam" id="1.10.10.60:FF:000393">
    <property type="entry name" value="Small nuclear RNA activating complex polypeptide 4"/>
    <property type="match status" value="1"/>
</dbReference>
<dbReference type="FunFam" id="1.10.10.60:FF:000314">
    <property type="entry name" value="Small nuclear RNA-activating complex, polypeptide 4"/>
    <property type="match status" value="1"/>
</dbReference>
<dbReference type="FunFam" id="1.10.10.60:FF:000321">
    <property type="entry name" value="Small nuclear RNA-activating complex, polypeptide 4"/>
    <property type="match status" value="1"/>
</dbReference>
<dbReference type="FunFam" id="1.10.10.60:FF:000016">
    <property type="entry name" value="Transcriptional activator Myb isoform A"/>
    <property type="match status" value="1"/>
</dbReference>
<dbReference type="Gene3D" id="1.10.10.60">
    <property type="entry name" value="Homeodomain-like"/>
    <property type="match status" value="4"/>
</dbReference>
<dbReference type="InterPro" id="IPR009057">
    <property type="entry name" value="Homeodomain-like_sf"/>
</dbReference>
<dbReference type="InterPro" id="IPR051575">
    <property type="entry name" value="Myb-like_DNA-bd"/>
</dbReference>
<dbReference type="InterPro" id="IPR017930">
    <property type="entry name" value="Myb_dom"/>
</dbReference>
<dbReference type="InterPro" id="IPR001005">
    <property type="entry name" value="SANT/Myb"/>
</dbReference>
<dbReference type="InterPro" id="IPR017884">
    <property type="entry name" value="SANT_dom"/>
</dbReference>
<dbReference type="PANTHER" id="PTHR46621">
    <property type="entry name" value="SNRNA-ACTIVATING PROTEIN COMPLEX SUBUNIT 4"/>
    <property type="match status" value="1"/>
</dbReference>
<dbReference type="PANTHER" id="PTHR46621:SF1">
    <property type="entry name" value="SNRNA-ACTIVATING PROTEIN COMPLEX SUBUNIT 4"/>
    <property type="match status" value="1"/>
</dbReference>
<dbReference type="Pfam" id="PF13921">
    <property type="entry name" value="Myb_DNA-bind_6"/>
    <property type="match status" value="2"/>
</dbReference>
<dbReference type="SMART" id="SM00717">
    <property type="entry name" value="SANT"/>
    <property type="match status" value="5"/>
</dbReference>
<dbReference type="SUPFAM" id="SSF46689">
    <property type="entry name" value="Homeodomain-like"/>
    <property type="match status" value="3"/>
</dbReference>
<dbReference type="PROSITE" id="PS51294">
    <property type="entry name" value="HTH_MYB"/>
    <property type="match status" value="3"/>
</dbReference>
<dbReference type="PROSITE" id="PS50090">
    <property type="entry name" value="MYB_LIKE"/>
    <property type="match status" value="1"/>
</dbReference>
<organism>
    <name type="scientific">Mus musculus</name>
    <name type="common">Mouse</name>
    <dbReference type="NCBI Taxonomy" id="10090"/>
    <lineage>
        <taxon>Eukaryota</taxon>
        <taxon>Metazoa</taxon>
        <taxon>Chordata</taxon>
        <taxon>Craniata</taxon>
        <taxon>Vertebrata</taxon>
        <taxon>Euteleostomi</taxon>
        <taxon>Mammalia</taxon>
        <taxon>Eutheria</taxon>
        <taxon>Euarchontoglires</taxon>
        <taxon>Glires</taxon>
        <taxon>Rodentia</taxon>
        <taxon>Myomorpha</taxon>
        <taxon>Muroidea</taxon>
        <taxon>Muridae</taxon>
        <taxon>Murinae</taxon>
        <taxon>Mus</taxon>
        <taxon>Mus</taxon>
    </lineage>
</organism>
<feature type="chain" id="PRO_0000197121" description="snRNA-activating protein complex subunit 4">
    <location>
        <begin position="1"/>
        <end position="1333"/>
    </location>
</feature>
<feature type="domain" description="Myb-like 1" evidence="3">
    <location>
        <begin position="250"/>
        <end position="288"/>
    </location>
</feature>
<feature type="domain" description="HTH myb-type 1" evidence="4">
    <location>
        <begin position="289"/>
        <end position="343"/>
    </location>
</feature>
<feature type="domain" description="Myb-like 2" evidence="3">
    <location>
        <begin position="344"/>
        <end position="395"/>
    </location>
</feature>
<feature type="domain" description="HTH myb-type 2" evidence="4">
    <location>
        <begin position="396"/>
        <end position="451"/>
    </location>
</feature>
<feature type="domain" description="HTH myb-type 3" evidence="4">
    <location>
        <begin position="452"/>
        <end position="503"/>
    </location>
</feature>
<feature type="DNA-binding region" description="H-T-H motif" evidence="4">
    <location>
        <begin position="317"/>
        <end position="341"/>
    </location>
</feature>
<feature type="DNA-binding region" description="H-T-H motif" evidence="4">
    <location>
        <begin position="424"/>
        <end position="447"/>
    </location>
</feature>
<feature type="DNA-binding region" description="H-T-H motif" evidence="4">
    <location>
        <begin position="476"/>
        <end position="499"/>
    </location>
</feature>
<feature type="region of interest" description="Disordered" evidence="5">
    <location>
        <begin position="29"/>
        <end position="84"/>
    </location>
</feature>
<feature type="region of interest" description="SNAPC5-binding" evidence="2">
    <location>
        <begin position="84"/>
        <end position="133"/>
    </location>
</feature>
<feature type="region of interest" description="Disordered" evidence="5">
    <location>
        <begin position="503"/>
        <end position="558"/>
    </location>
</feature>
<feature type="region of interest" description="Disordered" evidence="5">
    <location>
        <begin position="662"/>
        <end position="702"/>
    </location>
</feature>
<feature type="region of interest" description="Disordered" evidence="5">
    <location>
        <begin position="811"/>
        <end position="842"/>
    </location>
</feature>
<feature type="region of interest" description="Disordered" evidence="5">
    <location>
        <begin position="1079"/>
        <end position="1117"/>
    </location>
</feature>
<feature type="region of interest" description="SNAPC2-binding" evidence="2">
    <location>
        <begin position="1131"/>
        <end position="1247"/>
    </location>
</feature>
<feature type="region of interest" description="Disordered" evidence="5">
    <location>
        <begin position="1282"/>
        <end position="1333"/>
    </location>
</feature>
<feature type="compositionally biased region" description="Acidic residues" evidence="5">
    <location>
        <begin position="41"/>
        <end position="52"/>
    </location>
</feature>
<feature type="compositionally biased region" description="Acidic residues" evidence="5">
    <location>
        <begin position="59"/>
        <end position="73"/>
    </location>
</feature>
<feature type="compositionally biased region" description="Basic residues" evidence="5">
    <location>
        <begin position="503"/>
        <end position="515"/>
    </location>
</feature>
<feature type="compositionally biased region" description="Low complexity" evidence="5">
    <location>
        <begin position="516"/>
        <end position="546"/>
    </location>
</feature>
<feature type="compositionally biased region" description="Polar residues" evidence="5">
    <location>
        <begin position="672"/>
        <end position="686"/>
    </location>
</feature>
<feature type="compositionally biased region" description="Polar residues" evidence="5">
    <location>
        <begin position="811"/>
        <end position="826"/>
    </location>
</feature>
<feature type="compositionally biased region" description="Basic residues" evidence="5">
    <location>
        <begin position="1324"/>
        <end position="1333"/>
    </location>
</feature>
<feature type="modified residue" description="Phosphoserine" evidence="2">
    <location>
        <position position="68"/>
    </location>
</feature>
<feature type="modified residue" description="Phosphoserine" evidence="2">
    <location>
        <position position="1252"/>
    </location>
</feature>
<feature type="modified residue" description="Phosphoserine" evidence="2">
    <location>
        <position position="1254"/>
    </location>
</feature>
<feature type="modified residue" description="Phosphoserine" evidence="13">
    <location>
        <position position="1301"/>
    </location>
</feature>
<feature type="modified residue" description="Phosphoserine" evidence="13">
    <location>
        <position position="1309"/>
    </location>
</feature>
<feature type="splice variant" id="VSP_051855" description="In isoform 3." evidence="6">
    <location>
        <begin position="1"/>
        <end position="90"/>
    </location>
</feature>
<feature type="splice variant" id="VSP_051857" description="In isoform 2 and isoform 3." evidence="6 7">
    <location>
        <begin position="1290"/>
        <end position="1297"/>
    </location>
</feature>
<feature type="sequence conflict" description="In Ref. 2; AAH44754." evidence="8" ref="2">
    <original>LARKKQHL</original>
    <variation>DAWADAWV</variation>
    <location>
        <begin position="498"/>
        <end position="505"/>
    </location>
</feature>
<name>SNPC4_MOUSE</name>
<evidence type="ECO:0000250" key="1"/>
<evidence type="ECO:0000250" key="2">
    <source>
        <dbReference type="UniProtKB" id="Q5SXM2"/>
    </source>
</evidence>
<evidence type="ECO:0000255" key="3">
    <source>
        <dbReference type="PROSITE-ProRule" id="PRU00133"/>
    </source>
</evidence>
<evidence type="ECO:0000255" key="4">
    <source>
        <dbReference type="PROSITE-ProRule" id="PRU00625"/>
    </source>
</evidence>
<evidence type="ECO:0000256" key="5">
    <source>
        <dbReference type="SAM" id="MobiDB-lite"/>
    </source>
</evidence>
<evidence type="ECO:0000303" key="6">
    <source>
    </source>
</evidence>
<evidence type="ECO:0000303" key="7">
    <source>
    </source>
</evidence>
<evidence type="ECO:0000305" key="8"/>
<evidence type="ECO:0000312" key="9">
    <source>
        <dbReference type="EMBL" id="AAH44754.1"/>
    </source>
</evidence>
<evidence type="ECO:0000312" key="10">
    <source>
        <dbReference type="EMBL" id="AAH57031.1"/>
    </source>
</evidence>
<evidence type="ECO:0000312" key="11">
    <source>
        <dbReference type="EMBL" id="BAC36843.1"/>
    </source>
</evidence>
<evidence type="ECO:0000312" key="12">
    <source>
        <dbReference type="MGI" id="MGI:2443935"/>
    </source>
</evidence>
<evidence type="ECO:0007744" key="13">
    <source>
    </source>
</evidence>
<protein>
    <recommendedName>
        <fullName>snRNA-activating protein complex subunit 4</fullName>
        <shortName>SNAPc subunit 4</shortName>
    </recommendedName>
    <alternativeName>
        <fullName>snRNA-activating protein complex 190 kDa subunit</fullName>
        <shortName>SNAPc 190 kDa subunit</shortName>
    </alternativeName>
</protein>
<proteinExistence type="evidence at protein level"/>
<accession>Q8BP86</accession>
<accession>Q6PGG7</accession>
<accession>Q80UG9</accession>
<accession>Q810L1</accession>
<sequence>MDIDAEREKITQEIQELERILYPGSTSVHFEVSESSLSSDSEADSLPDEDLETAGAPILEEEGSSESSNDEEDPKDKALPEDPETCLQLNMVYQEVIREKLAEVSQLLAQNQEQQEEILFDLSGTKCPKVKDGRSLPSYMYIGHFLKPYFKDKVTGVGPPANEETREKATQGIKAFEQLLVTKWKHWEKALLRKSVVSDRLQRLLQPKLLKLEYLHEKQSRVSSELERQALEKQIKEAEKEIQDINQLPEEALLGNRLDSHDWEKISNINFEGARSAEEIRKFWQSSEHPSISKQEWSTEEVERLKAIAATHGHLEWHLVAEELGTSRSAFQCLQKFQQYNKTLKRKEWTEEEDHMLTQLVQEMRVGNHIPYRKIVYFMEGRDSMQLIYRWTKSLDPSLKRGFWAPEEDAKLLQAVAKYGAQDWFKIREEVPGRSDAQCRDRYIRRLHFSLKKGRWNAKEEQQLIQLIEKYGVGHWARIASELPHRSGSQCLSKWKILARKKQHLQRKRGQRPRHSSQWSSSGSSSSSSEDYGSSSGSDGSSGSENSDVELEASLEKSRALTPQQYRVPDIDLWVPTRLITSQSQREGTGCYPQHPAVSCCTQDASQNHHKEGSTTVSAAEKNQLQVPYETHSTVPRGDRFLHFSDTHSASLKDPACKSHTLMKERPKQPLLPSSRSGSDPGNNTAGPHLRQLWHGTYQNKQRRKRQALHRRLLKHRLLLAVIPWVGDINLACTQAPRRPATVQTKADSIRMQLECARLASTPVFTLLIQLLQIDTAGCMEVVRERKSQPPALLQPGTRNTQPHLLQASSNAKNNTGCLPSMTGEQTAKRASHKGRPRLGSCRTEATPFQVPVAAPRGLRPKPKTVSELLREKRLRESHAKKATQALGLNSQLLVSSPVILQPPLLPVPHGSPVVGPATSSVELSVPVAPVMVSSSPSGSWPVGGISATDKQPPNLQTISLNPPHKGTQVAAPAAFRSLALAPGQVPTGGHLSTLGQTSTTSQKQSLPKVLPILRAAPSLTQLSVQPPVSGQPLATKSSLPVNWVLTTQKLLSVQVPAVVGLPQSVMTPETIGLQAKQLPSPAKTPAFLEQPPASTDTEPKGPQGQEIPPTPGPEKAALDLSLLSQESEAAIVTWLKGCQGAFVPPLGSRMPYHPPSLCSLRALSSLLLQKQDLEQKASSLAASQAAGAQPDPKAGALQASLELVQRQFRDNPAYLLLKTRFLAIFSLPAFLATLPPNSIPTTLSPDVAVVSESDSEDLGDLELKDRARQLDCMACRVQASPAAPDPVQSHLVSPGQRAPSPGEVSAPSPLDASDGLDDLNVLRTRRARHSRR</sequence>
<reference evidence="8 11" key="1">
    <citation type="journal article" date="2005" name="Science">
        <title>The transcriptional landscape of the mammalian genome.</title>
        <authorList>
            <person name="Carninci P."/>
            <person name="Kasukawa T."/>
            <person name="Katayama S."/>
            <person name="Gough J."/>
            <person name="Frith M.C."/>
            <person name="Maeda N."/>
            <person name="Oyama R."/>
            <person name="Ravasi T."/>
            <person name="Lenhard B."/>
            <person name="Wells C."/>
            <person name="Kodzius R."/>
            <person name="Shimokawa K."/>
            <person name="Bajic V.B."/>
            <person name="Brenner S.E."/>
            <person name="Batalov S."/>
            <person name="Forrest A.R."/>
            <person name="Zavolan M."/>
            <person name="Davis M.J."/>
            <person name="Wilming L.G."/>
            <person name="Aidinis V."/>
            <person name="Allen J.E."/>
            <person name="Ambesi-Impiombato A."/>
            <person name="Apweiler R."/>
            <person name="Aturaliya R.N."/>
            <person name="Bailey T.L."/>
            <person name="Bansal M."/>
            <person name="Baxter L."/>
            <person name="Beisel K.W."/>
            <person name="Bersano T."/>
            <person name="Bono H."/>
            <person name="Chalk A.M."/>
            <person name="Chiu K.P."/>
            <person name="Choudhary V."/>
            <person name="Christoffels A."/>
            <person name="Clutterbuck D.R."/>
            <person name="Crowe M.L."/>
            <person name="Dalla E."/>
            <person name="Dalrymple B.P."/>
            <person name="de Bono B."/>
            <person name="Della Gatta G."/>
            <person name="di Bernardo D."/>
            <person name="Down T."/>
            <person name="Engstrom P."/>
            <person name="Fagiolini M."/>
            <person name="Faulkner G."/>
            <person name="Fletcher C.F."/>
            <person name="Fukushima T."/>
            <person name="Furuno M."/>
            <person name="Futaki S."/>
            <person name="Gariboldi M."/>
            <person name="Georgii-Hemming P."/>
            <person name="Gingeras T.R."/>
            <person name="Gojobori T."/>
            <person name="Green R.E."/>
            <person name="Gustincich S."/>
            <person name="Harbers M."/>
            <person name="Hayashi Y."/>
            <person name="Hensch T.K."/>
            <person name="Hirokawa N."/>
            <person name="Hill D."/>
            <person name="Huminiecki L."/>
            <person name="Iacono M."/>
            <person name="Ikeo K."/>
            <person name="Iwama A."/>
            <person name="Ishikawa T."/>
            <person name="Jakt M."/>
            <person name="Kanapin A."/>
            <person name="Katoh M."/>
            <person name="Kawasawa Y."/>
            <person name="Kelso J."/>
            <person name="Kitamura H."/>
            <person name="Kitano H."/>
            <person name="Kollias G."/>
            <person name="Krishnan S.P."/>
            <person name="Kruger A."/>
            <person name="Kummerfeld S.K."/>
            <person name="Kurochkin I.V."/>
            <person name="Lareau L.F."/>
            <person name="Lazarevic D."/>
            <person name="Lipovich L."/>
            <person name="Liu J."/>
            <person name="Liuni S."/>
            <person name="McWilliam S."/>
            <person name="Madan Babu M."/>
            <person name="Madera M."/>
            <person name="Marchionni L."/>
            <person name="Matsuda H."/>
            <person name="Matsuzawa S."/>
            <person name="Miki H."/>
            <person name="Mignone F."/>
            <person name="Miyake S."/>
            <person name="Morris K."/>
            <person name="Mottagui-Tabar S."/>
            <person name="Mulder N."/>
            <person name="Nakano N."/>
            <person name="Nakauchi H."/>
            <person name="Ng P."/>
            <person name="Nilsson R."/>
            <person name="Nishiguchi S."/>
            <person name="Nishikawa S."/>
            <person name="Nori F."/>
            <person name="Ohara O."/>
            <person name="Okazaki Y."/>
            <person name="Orlando V."/>
            <person name="Pang K.C."/>
            <person name="Pavan W.J."/>
            <person name="Pavesi G."/>
            <person name="Pesole G."/>
            <person name="Petrovsky N."/>
            <person name="Piazza S."/>
            <person name="Reed J."/>
            <person name="Reid J.F."/>
            <person name="Ring B.Z."/>
            <person name="Ringwald M."/>
            <person name="Rost B."/>
            <person name="Ruan Y."/>
            <person name="Salzberg S.L."/>
            <person name="Sandelin A."/>
            <person name="Schneider C."/>
            <person name="Schoenbach C."/>
            <person name="Sekiguchi K."/>
            <person name="Semple C.A."/>
            <person name="Seno S."/>
            <person name="Sessa L."/>
            <person name="Sheng Y."/>
            <person name="Shibata Y."/>
            <person name="Shimada H."/>
            <person name="Shimada K."/>
            <person name="Silva D."/>
            <person name="Sinclair B."/>
            <person name="Sperling S."/>
            <person name="Stupka E."/>
            <person name="Sugiura K."/>
            <person name="Sultana R."/>
            <person name="Takenaka Y."/>
            <person name="Taki K."/>
            <person name="Tammoja K."/>
            <person name="Tan S.L."/>
            <person name="Tang S."/>
            <person name="Taylor M.S."/>
            <person name="Tegner J."/>
            <person name="Teichmann S.A."/>
            <person name="Ueda H.R."/>
            <person name="van Nimwegen E."/>
            <person name="Verardo R."/>
            <person name="Wei C.L."/>
            <person name="Yagi K."/>
            <person name="Yamanishi H."/>
            <person name="Zabarovsky E."/>
            <person name="Zhu S."/>
            <person name="Zimmer A."/>
            <person name="Hide W."/>
            <person name="Bult C."/>
            <person name="Grimmond S.M."/>
            <person name="Teasdale R.D."/>
            <person name="Liu E.T."/>
            <person name="Brusic V."/>
            <person name="Quackenbush J."/>
            <person name="Wahlestedt C."/>
            <person name="Mattick J.S."/>
            <person name="Hume D.A."/>
            <person name="Kai C."/>
            <person name="Sasaki D."/>
            <person name="Tomaru Y."/>
            <person name="Fukuda S."/>
            <person name="Kanamori-Katayama M."/>
            <person name="Suzuki M."/>
            <person name="Aoki J."/>
            <person name="Arakawa T."/>
            <person name="Iida J."/>
            <person name="Imamura K."/>
            <person name="Itoh M."/>
            <person name="Kato T."/>
            <person name="Kawaji H."/>
            <person name="Kawagashira N."/>
            <person name="Kawashima T."/>
            <person name="Kojima M."/>
            <person name="Kondo S."/>
            <person name="Konno H."/>
            <person name="Nakano K."/>
            <person name="Ninomiya N."/>
            <person name="Nishio T."/>
            <person name="Okada M."/>
            <person name="Plessy C."/>
            <person name="Shibata K."/>
            <person name="Shiraki T."/>
            <person name="Suzuki S."/>
            <person name="Tagami M."/>
            <person name="Waki K."/>
            <person name="Watahiki A."/>
            <person name="Okamura-Oho Y."/>
            <person name="Suzuki H."/>
            <person name="Kawai J."/>
            <person name="Hayashizaki Y."/>
        </authorList>
    </citation>
    <scope>NUCLEOTIDE SEQUENCE [LARGE SCALE MRNA] (ISOFORM 2)</scope>
    <source>
        <strain evidence="11">C57BL/6J</strain>
        <tissue evidence="11">Embryo</tissue>
    </source>
</reference>
<reference evidence="8 10" key="2">
    <citation type="journal article" date="2004" name="Genome Res.">
        <title>The status, quality, and expansion of the NIH full-length cDNA project: the Mammalian Gene Collection (MGC).</title>
        <authorList>
            <consortium name="The MGC Project Team"/>
        </authorList>
    </citation>
    <scope>NUCLEOTIDE SEQUENCE [LARGE SCALE MRNA] (ISOFORM 3)</scope>
    <scope>NUCLEOTIDE SEQUENCE [LARGE SCALE MRNA] OF 498-1325 (ISOFORM 1)</scope>
    <source>
        <strain evidence="9">129</strain>
        <strain evidence="10">C57BL/6J</strain>
        <strain>FVB/N</strain>
        <tissue evidence="10">Brain</tissue>
        <tissue evidence="9">Mammary gland</tissue>
    </source>
</reference>
<reference key="3">
    <citation type="journal article" date="2010" name="Cell">
        <title>A tissue-specific atlas of mouse protein phosphorylation and expression.</title>
        <authorList>
            <person name="Huttlin E.L."/>
            <person name="Jedrychowski M.P."/>
            <person name="Elias J.E."/>
            <person name="Goswami T."/>
            <person name="Rad R."/>
            <person name="Beausoleil S.A."/>
            <person name="Villen J."/>
            <person name="Haas W."/>
            <person name="Sowa M.E."/>
            <person name="Gygi S.P."/>
        </authorList>
    </citation>
    <scope>PHOSPHORYLATION [LARGE SCALE ANALYSIS] AT SER-1301 AND SER-1309</scope>
    <scope>IDENTIFICATION BY MASS SPECTROMETRY [LARGE SCALE ANALYSIS]</scope>
    <source>
        <tissue>Kidney</tissue>
        <tissue>Spleen</tissue>
    </source>
</reference>